<dbReference type="EC" id="2.4.1.21"/>
<dbReference type="EMBL" id="AF395537">
    <property type="protein sequence ID" value="AAK81729.1"/>
    <property type="molecule type" value="mRNA"/>
</dbReference>
<dbReference type="EMBL" id="AP004114">
    <property type="protein sequence ID" value="BAD15539.1"/>
    <property type="status" value="ALT_SEQ"/>
    <property type="molecule type" value="Genomic_DNA"/>
</dbReference>
<dbReference type="EMBL" id="AP005297">
    <property type="protein sequence ID" value="BAD16123.1"/>
    <property type="status" value="ALT_SEQ"/>
    <property type="molecule type" value="Genomic_DNA"/>
</dbReference>
<dbReference type="EMBL" id="AP014958">
    <property type="status" value="NOT_ANNOTATED_CDS"/>
    <property type="molecule type" value="Genomic_DNA"/>
</dbReference>
<dbReference type="EMBL" id="AJ308110">
    <property type="protein sequence ID" value="CAC59826.1"/>
    <property type="molecule type" value="mRNA"/>
</dbReference>
<dbReference type="RefSeq" id="XP_015627452.1">
    <property type="nucleotide sequence ID" value="XM_015771966.1"/>
</dbReference>
<dbReference type="SMR" id="Q6Z2T8"/>
<dbReference type="FunCoup" id="Q6Z2T8">
    <property type="interactions" value="170"/>
</dbReference>
<dbReference type="STRING" id="39947.Q6Z2T8"/>
<dbReference type="CAZy" id="GT5">
    <property type="family name" value="Glycosyltransferase Family 5"/>
</dbReference>
<dbReference type="PaxDb" id="39947-Q6Z2T8"/>
<dbReference type="EnsemblPlants" id="Os02t0744700-03">
    <property type="protein sequence ID" value="Os02t0744700-03"/>
    <property type="gene ID" value="Os02g0744700"/>
</dbReference>
<dbReference type="Gramene" id="Os02t0744700-03">
    <property type="protein sequence ID" value="Os02t0744700-03"/>
    <property type="gene ID" value="Os02g0744700"/>
</dbReference>
<dbReference type="eggNOG" id="ENOG502QT35">
    <property type="taxonomic scope" value="Eukaryota"/>
</dbReference>
<dbReference type="InParanoid" id="Q6Z2T8"/>
<dbReference type="OrthoDB" id="512920at2759"/>
<dbReference type="UniPathway" id="UPA00152"/>
<dbReference type="Proteomes" id="UP000000763">
    <property type="component" value="Chromosome 2"/>
</dbReference>
<dbReference type="Proteomes" id="UP000059680">
    <property type="component" value="Chromosome 2"/>
</dbReference>
<dbReference type="GO" id="GO:0009501">
    <property type="term" value="C:amyloplast"/>
    <property type="evidence" value="ECO:0007669"/>
    <property type="project" value="UniProtKB-SubCell"/>
</dbReference>
<dbReference type="GO" id="GO:0009507">
    <property type="term" value="C:chloroplast"/>
    <property type="evidence" value="ECO:0007669"/>
    <property type="project" value="UniProtKB-SubCell"/>
</dbReference>
<dbReference type="GO" id="GO:0009011">
    <property type="term" value="F:alpha-1,4-glucan glucosyltransferase (ADP-glucose donor) activity"/>
    <property type="evidence" value="ECO:0007669"/>
    <property type="project" value="UniProtKB-EC"/>
</dbReference>
<dbReference type="GO" id="GO:0004373">
    <property type="term" value="F:alpha-1,4-glucan glucosyltransferase (UDP-glucose donor) activity"/>
    <property type="evidence" value="ECO:0007669"/>
    <property type="project" value="InterPro"/>
</dbReference>
<dbReference type="GO" id="GO:0019252">
    <property type="term" value="P:starch biosynthetic process"/>
    <property type="evidence" value="ECO:0007669"/>
    <property type="project" value="UniProtKB-UniPathway"/>
</dbReference>
<dbReference type="CDD" id="cd03791">
    <property type="entry name" value="GT5_Glycogen_synthase_DULL1-like"/>
    <property type="match status" value="1"/>
</dbReference>
<dbReference type="FunFam" id="3.40.50.2000:FF:000048">
    <property type="entry name" value="Starch synthase, chloroplastic/amyloplastic"/>
    <property type="match status" value="1"/>
</dbReference>
<dbReference type="Gene3D" id="3.40.50.2000">
    <property type="entry name" value="Glycogen Phosphorylase B"/>
    <property type="match status" value="2"/>
</dbReference>
<dbReference type="HAMAP" id="MF_00484">
    <property type="entry name" value="Glycogen_synth"/>
    <property type="match status" value="1"/>
</dbReference>
<dbReference type="InterPro" id="IPR011835">
    <property type="entry name" value="GS/SS"/>
</dbReference>
<dbReference type="InterPro" id="IPR013534">
    <property type="entry name" value="Starch_synth_cat_dom"/>
</dbReference>
<dbReference type="NCBIfam" id="TIGR02095">
    <property type="entry name" value="glgA"/>
    <property type="match status" value="1"/>
</dbReference>
<dbReference type="PANTHER" id="PTHR45825">
    <property type="entry name" value="GRANULE-BOUND STARCH SYNTHASE 1, CHLOROPLASTIC/AMYLOPLASTIC"/>
    <property type="match status" value="1"/>
</dbReference>
<dbReference type="PANTHER" id="PTHR45825:SF13">
    <property type="entry name" value="SOLUBLE STARCH SYNTHASE 2-2, CHLOROPLASTIC_AMYLOPLASTIC"/>
    <property type="match status" value="1"/>
</dbReference>
<dbReference type="Pfam" id="PF13692">
    <property type="entry name" value="Glyco_trans_1_4"/>
    <property type="match status" value="1"/>
</dbReference>
<dbReference type="Pfam" id="PF08323">
    <property type="entry name" value="Glyco_transf_5"/>
    <property type="match status" value="1"/>
</dbReference>
<dbReference type="SUPFAM" id="SSF53756">
    <property type="entry name" value="UDP-Glycosyltransferase/glycogen phosphorylase"/>
    <property type="match status" value="1"/>
</dbReference>
<organism>
    <name type="scientific">Oryza sativa subsp. japonica</name>
    <name type="common">Rice</name>
    <dbReference type="NCBI Taxonomy" id="39947"/>
    <lineage>
        <taxon>Eukaryota</taxon>
        <taxon>Viridiplantae</taxon>
        <taxon>Streptophyta</taxon>
        <taxon>Embryophyta</taxon>
        <taxon>Tracheophyta</taxon>
        <taxon>Spermatophyta</taxon>
        <taxon>Magnoliopsida</taxon>
        <taxon>Liliopsida</taxon>
        <taxon>Poales</taxon>
        <taxon>Poaceae</taxon>
        <taxon>BOP clade</taxon>
        <taxon>Oryzoideae</taxon>
        <taxon>Oryzeae</taxon>
        <taxon>Oryzinae</taxon>
        <taxon>Oryza</taxon>
        <taxon>Oryza sativa</taxon>
    </lineage>
</organism>
<sequence length="694" mass="75623">MSGAIASSPAATLFLAGSSSSSPRRRRSRVSGVWWHLYGGTGLRLHWERRGLVRDGAVVCSASAAGGEDGVAKAKTKSAGSSKAVAVQGSTAKADHVEDSVSSPKYVKPAVAKQNGEVVSRATKSDAPVSKPKVDPSVPASKAEADGNAQAVESKAALDKKEDVGVAEPLEAKADAGGDAGAVSSADDSENKESGPLAGPNVMNVIVVASECSPFCKTGGLGDVVGALPKALARRGHRVMVVIPRYGEYAEAKDLGVRKRYRVAGQDSEVSYFHAFIDGVDFVFLEAPPFRHRHNDIYGGERFDVLKRMILFCKAAVEVPWFAPCGGSIYGDGNLVFIANDWHTALLPVYLKAYYRDNGLMQYTRSVLVIHNIAHQGRGPVDDFATMDLPEHYIDHFRLYDPVGGEHSNVFAAGLKMADRAVTVSHGYLWEIKTMDGGWGLHEIINHNDWKLQGIVNGIDMAEWNPEVDEHLQSDGYANYTFETLDTGKKQCKEALQRQLGLQVRDDVPLIGFIGRLDHQKGVDIIGDAMPWIAGQDVQVVMLGTGRPDLEEMLRRFESEHNDKVRGWVGFSVQLAHRITAGADVLLMPSRFEPCGLNQLYAMAYGTVPVVHAVGGLRDTVAPFDPFADTGLGWTFDRAEANRMIDALGHCLNTYRNYKESWRGLQARGMAQDLSWDHAAELYEDVLVKAKYQW</sequence>
<protein>
    <recommendedName>
        <fullName>Soluble starch synthase 2-2, chloroplastic/amyloplastic</fullName>
        <ecNumber>2.4.1.21</ecNumber>
    </recommendedName>
    <alternativeName>
        <fullName>Soluble starch synthase II-2</fullName>
    </alternativeName>
</protein>
<name>SSY22_ORYSJ</name>
<proteinExistence type="evidence at transcript level"/>
<accession>Q6Z2T8</accession>
<accession>Q949A6</accession>
<accession>Q94ET4</accession>
<comment type="function">
    <text>May contribute to the deposition of transient starch in chloroplasts of leaves.</text>
</comment>
<comment type="catalytic activity">
    <reaction>
        <text>[(1-&gt;4)-alpha-D-glucosyl](n) + ADP-alpha-D-glucose = [(1-&gt;4)-alpha-D-glucosyl](n+1) + ADP + H(+)</text>
        <dbReference type="Rhea" id="RHEA:18189"/>
        <dbReference type="Rhea" id="RHEA-COMP:9584"/>
        <dbReference type="Rhea" id="RHEA-COMP:9587"/>
        <dbReference type="ChEBI" id="CHEBI:15378"/>
        <dbReference type="ChEBI" id="CHEBI:15444"/>
        <dbReference type="ChEBI" id="CHEBI:57498"/>
        <dbReference type="ChEBI" id="CHEBI:456216"/>
        <dbReference type="EC" id="2.4.1.21"/>
    </reaction>
</comment>
<comment type="pathway">
    <text>Glycan biosynthesis; starch biosynthesis.</text>
</comment>
<comment type="subcellular location">
    <subcellularLocation>
        <location evidence="4">Plastid</location>
        <location evidence="4">Amyloplast</location>
    </subcellularLocation>
    <subcellularLocation>
        <location evidence="4">Plastid</location>
        <location evidence="4">Chloroplast</location>
    </subcellularLocation>
    <text>Amyloplast or chloroplast, granule-bound and soluble.</text>
</comment>
<comment type="tissue specificity">
    <text evidence="4">Expressed in leaves and weakly in endosperm and roots.</text>
</comment>
<comment type="developmental stage">
    <text>Expressed in developing caryopsis at 1 to 5 days after flowering. Expressed exclusively in the pericarp at 5 days after flowering.</text>
</comment>
<comment type="similarity">
    <text evidence="5">Belongs to the glycosyltransferase 1 family. Bacterial/plant glycogen synthase subfamily.</text>
</comment>
<comment type="sequence caution" evidence="5">
    <conflict type="erroneous gene model prediction">
        <sequence resource="EMBL-CDS" id="BAD15539"/>
    </conflict>
</comment>
<comment type="sequence caution" evidence="5">
    <conflict type="erroneous gene model prediction">
        <sequence resource="EMBL-CDS" id="BAD16123"/>
    </conflict>
</comment>
<evidence type="ECO:0000250" key="1"/>
<evidence type="ECO:0000255" key="2"/>
<evidence type="ECO:0000256" key="3">
    <source>
        <dbReference type="SAM" id="MobiDB-lite"/>
    </source>
</evidence>
<evidence type="ECO:0000269" key="4">
    <source>
    </source>
</evidence>
<evidence type="ECO:0000305" key="5"/>
<reference key="1">
    <citation type="journal article" date="2004" name="Planta">
        <title>Molecular cloning and expression analysis of three genes encoding starch synthase II in rice.</title>
        <authorList>
            <person name="Jiang H.W."/>
            <person name="Dian W.M."/>
            <person name="Liu F."/>
            <person name="Wu P."/>
        </authorList>
    </citation>
    <scope>NUCLEOTIDE SEQUENCE [MRNA]</scope>
</reference>
<reference key="2">
    <citation type="journal article" date="2005" name="Nature">
        <title>The map-based sequence of the rice genome.</title>
        <authorList>
            <consortium name="International rice genome sequencing project (IRGSP)"/>
        </authorList>
    </citation>
    <scope>NUCLEOTIDE SEQUENCE [LARGE SCALE GENOMIC DNA]</scope>
    <source>
        <strain>cv. Nipponbare</strain>
    </source>
</reference>
<reference key="3">
    <citation type="journal article" date="2013" name="Rice">
        <title>Improvement of the Oryza sativa Nipponbare reference genome using next generation sequence and optical map data.</title>
        <authorList>
            <person name="Kawahara Y."/>
            <person name="de la Bastide M."/>
            <person name="Hamilton J.P."/>
            <person name="Kanamori H."/>
            <person name="McCombie W.R."/>
            <person name="Ouyang S."/>
            <person name="Schwartz D.C."/>
            <person name="Tanaka T."/>
            <person name="Wu J."/>
            <person name="Zhou S."/>
            <person name="Childs K.L."/>
            <person name="Davidson R.M."/>
            <person name="Lin H."/>
            <person name="Quesada-Ocampo L."/>
            <person name="Vaillancourt B."/>
            <person name="Sakai H."/>
            <person name="Lee S.S."/>
            <person name="Kim J."/>
            <person name="Numa H."/>
            <person name="Itoh T."/>
            <person name="Buell C.R."/>
            <person name="Matsumoto T."/>
        </authorList>
    </citation>
    <scope>GENOME REANNOTATION</scope>
    <source>
        <strain>cv. Nipponbare</strain>
    </source>
</reference>
<reference key="4">
    <citation type="submission" date="2001-08" db="EMBL/GenBank/DDBJ databases">
        <authorList>
            <person name="Frohberg C."/>
        </authorList>
    </citation>
    <scope>NUCLEOTIDE SEQUENCE [MRNA] OF 58-694</scope>
</reference>
<reference key="5">
    <citation type="journal article" date="2004" name="Planta">
        <title>A comprehensive expression analysis of the starch synthase gene family in rice (Oryza sativa L.).</title>
        <authorList>
            <person name="Hirose T."/>
            <person name="Terao T."/>
        </authorList>
    </citation>
    <scope>SUBCELLULAR LOCATION</scope>
    <scope>TISSUE SPECIFICITY</scope>
    <scope>NOMENCLATURE</scope>
</reference>
<keyword id="KW-0035">Amyloplast</keyword>
<keyword id="KW-0150">Chloroplast</keyword>
<keyword id="KW-0328">Glycosyltransferase</keyword>
<keyword id="KW-0934">Plastid</keyword>
<keyword id="KW-1185">Reference proteome</keyword>
<keyword id="KW-0750">Starch biosynthesis</keyword>
<keyword id="KW-0808">Transferase</keyword>
<keyword id="KW-0809">Transit peptide</keyword>
<feature type="transit peptide" description="Chloroplast" evidence="2">
    <location>
        <begin position="1"/>
        <end position="15"/>
    </location>
</feature>
<feature type="chain" id="PRO_0000011140" description="Soluble starch synthase 2-2, chloroplastic/amyloplastic">
    <location>
        <begin position="16"/>
        <end position="694"/>
    </location>
</feature>
<feature type="region of interest" description="Disordered" evidence="3">
    <location>
        <begin position="93"/>
        <end position="197"/>
    </location>
</feature>
<feature type="compositionally biased region" description="Low complexity" evidence="3">
    <location>
        <begin position="127"/>
        <end position="142"/>
    </location>
</feature>
<feature type="compositionally biased region" description="Basic and acidic residues" evidence="3">
    <location>
        <begin position="156"/>
        <end position="176"/>
    </location>
</feature>
<feature type="compositionally biased region" description="Low complexity" evidence="3">
    <location>
        <begin position="177"/>
        <end position="186"/>
    </location>
</feature>
<feature type="binding site" evidence="1">
    <location>
        <position position="217"/>
    </location>
    <ligand>
        <name>ADP-alpha-D-glucose</name>
        <dbReference type="ChEBI" id="CHEBI:57498"/>
    </ligand>
</feature>
<feature type="sequence conflict" description="In Ref. 4; CAC59826." evidence="5" ref="4">
    <original>T</original>
    <variation>A</variation>
    <location>
        <position position="76"/>
    </location>
</feature>
<feature type="sequence conflict" description="In Ref. 4; CAC59826." evidence="5" ref="4">
    <original>V</original>
    <variation>M</variation>
    <location>
        <position position="87"/>
    </location>
</feature>
<feature type="sequence conflict" description="In Ref. 4; CAC59826." evidence="5" ref="4">
    <original>Y</original>
    <variation>S</variation>
    <location>
        <position position="106"/>
    </location>
</feature>
<feature type="sequence conflict" description="In Ref. 4; CAC59826." evidence="5" ref="4">
    <original>S</original>
    <variation>P</variation>
    <location>
        <position position="130"/>
    </location>
</feature>
<feature type="sequence conflict" description="In Ref. 1; AAK81729." evidence="5" ref="1">
    <original>Y</original>
    <variation>C</variation>
    <location>
        <position position="350"/>
    </location>
</feature>
<feature type="sequence conflict" description="In Ref. 1; AAK81729." evidence="5" ref="1">
    <original>G</original>
    <variation>S</variation>
    <location>
        <position position="606"/>
    </location>
</feature>
<gene>
    <name type="primary">SSII-2</name>
    <name type="synonym">SS2</name>
    <name type="ordered locus">Os02g0744700</name>
    <name type="ordered locus">LOC_Os02g51070</name>
    <name type="ORF">OJ1118_G04.8</name>
    <name type="ORF">OJ1734_E02.35</name>
</gene>